<protein>
    <recommendedName>
        <fullName>A disintegrin and metalloproteinase with thrombospondin motifs 3</fullName>
        <shortName>ADAM-TS 3</shortName>
        <shortName>ADAM-TS3</shortName>
        <shortName>ADAMTS-3</shortName>
        <ecNumber>3.4.24.-</ecNumber>
    </recommendedName>
    <alternativeName>
        <fullName>Procollagen II N-proteinase</fullName>
        <shortName>PC II-NP</shortName>
    </alternativeName>
    <alternativeName>
        <fullName>Procollagen II amino propeptide-processing enzyme</fullName>
    </alternativeName>
</protein>
<gene>
    <name type="primary">ADAMTS3</name>
    <name type="synonym">KIAA0366</name>
</gene>
<name>ATS3_HUMAN</name>
<proteinExistence type="evidence at protein level"/>
<comment type="function">
    <text>Cleaves the propeptides of type II collagen prior to fibril assembly. Does not act on types I and III collagens.</text>
</comment>
<comment type="cofactor">
    <cofactor evidence="1">
        <name>Zn(2+)</name>
        <dbReference type="ChEBI" id="CHEBI:29105"/>
    </cofactor>
    <text evidence="1">Binds 1 zinc ion per subunit.</text>
</comment>
<comment type="interaction">
    <interactant intactId="EBI-12200127">
        <id>O15072</id>
    </interactant>
    <interactant intactId="EBI-947187">
        <id>Q9UHD9</id>
        <label>UBQLN2</label>
    </interactant>
    <organismsDiffer>false</organismsDiffer>
    <experiments>3</experiments>
</comment>
<comment type="subcellular location">
    <subcellularLocation>
        <location evidence="9">Secreted</location>
    </subcellularLocation>
    <subcellularLocation>
        <location evidence="1">Secreted</location>
        <location evidence="1">Extracellular space</location>
        <location evidence="1">Extracellular matrix</location>
    </subcellularLocation>
</comment>
<comment type="tissue specificity">
    <text>Found in cartilage and skin.</text>
</comment>
<comment type="domain">
    <text>The spacer domain and the TSP type-1 domains are important for a tight interaction with the extracellular matrix.</text>
</comment>
<comment type="PTM">
    <text evidence="1">The precursor is cleaved by a furin endopeptidase.</text>
</comment>
<comment type="PTM">
    <text evidence="1">Glycosylated. Can be O-fucosylated by POFUT2 on a serine or a threonine residue found within the consensus sequence C1-X(2)-(S/T)-C2-G of the TSP type-1 repeat domains where C1 and C2 are the first and second cysteine residue of the repeat, respectively. Fucosylated repeats can then be further glycosylated by the addition of a beta-1,3-glucose residue by the glucosyltransferase, B3GALTL. Fucosylation mediates the efficient secretion of ADAMTS family members. Can also be C-glycosylated with one or two mannose molecules on tryptophan residues within the consensus sequence W-X-X-W of the TPRs, and N-glycosylated. These other glycosylations can also facilitate secretion (By similarity).</text>
</comment>
<comment type="disease" evidence="9">
    <disease id="DI-05355">
        <name>Hennekam lymphangiectasia-lymphedema syndrome 3</name>
        <acronym>HKLLS3</acronym>
        <description>A form of Hennekam lymphangiectasia-lymphedema syndrome, a generalized lymph-vessels dysplasia characterized by intestinal lymphangiectasia with severe lymphedema of the limbs, genitalia and face. In addition, affected individuals have unusual facies and some manifest intellectual disability. HKLLS3 is characterized by widespread congenital edema, facial dysmorphism and protein-losing enteropathy of variable severity. HKLLS3 transmission pattern is consistent with autosomal recessive inheritance.</description>
        <dbReference type="MIM" id="618154"/>
    </disease>
    <text>The disease is caused by variants affecting the gene represented in this entry.</text>
</comment>
<comment type="caution">
    <text evidence="11">Has sometimes been referred to as ADAMTS4.</text>
</comment>
<accession>O15072</accession>
<accession>A1L3U9</accession>
<accession>Q9BXZ8</accession>
<feature type="signal peptide" evidence="2">
    <location>
        <begin position="1"/>
        <end position="20"/>
    </location>
</feature>
<feature type="propeptide" id="PRO_0000029162" evidence="1">
    <location>
        <begin position="21"/>
        <end position="249"/>
    </location>
</feature>
<feature type="chain" id="PRO_0000029163" description="A disintegrin and metalloproteinase with thrombospondin motifs 3">
    <location>
        <begin position="250"/>
        <end position="1205"/>
    </location>
</feature>
<feature type="domain" description="Peptidase M12B" evidence="5">
    <location>
        <begin position="256"/>
        <end position="460"/>
    </location>
</feature>
<feature type="domain" description="Disintegrin">
    <location>
        <begin position="470"/>
        <end position="550"/>
    </location>
</feature>
<feature type="domain" description="TSP type-1 1" evidence="3">
    <location>
        <begin position="551"/>
        <end position="606"/>
    </location>
</feature>
<feature type="domain" description="TSP type-1 2" evidence="3">
    <location>
        <begin position="845"/>
        <end position="905"/>
    </location>
</feature>
<feature type="domain" description="TSP type-1 3" evidence="3">
    <location>
        <begin position="906"/>
        <end position="965"/>
    </location>
</feature>
<feature type="domain" description="TSP type-1 4" evidence="3">
    <location>
        <begin position="966"/>
        <end position="1014"/>
    </location>
</feature>
<feature type="domain" description="PLAC" evidence="4">
    <location>
        <begin position="1015"/>
        <end position="1054"/>
    </location>
</feature>
<feature type="region of interest" description="Spacer">
    <location>
        <begin position="713"/>
        <end position="844"/>
    </location>
</feature>
<feature type="region of interest" description="Disordered" evidence="6">
    <location>
        <begin position="1174"/>
        <end position="1205"/>
    </location>
</feature>
<feature type="compositionally biased region" description="Basic and acidic residues" evidence="6">
    <location>
        <begin position="1185"/>
        <end position="1205"/>
    </location>
</feature>
<feature type="active site" evidence="5">
    <location>
        <position position="399"/>
    </location>
</feature>
<feature type="binding site" evidence="5">
    <location>
        <position position="398"/>
    </location>
    <ligand>
        <name>Zn(2+)</name>
        <dbReference type="ChEBI" id="CHEBI:29105"/>
        <note>catalytic</note>
    </ligand>
</feature>
<feature type="binding site" evidence="5">
    <location>
        <position position="402"/>
    </location>
    <ligand>
        <name>Zn(2+)</name>
        <dbReference type="ChEBI" id="CHEBI:29105"/>
        <note>catalytic</note>
    </ligand>
</feature>
<feature type="binding site" evidence="5">
    <location>
        <position position="408"/>
    </location>
    <ligand>
        <name>Zn(2+)</name>
        <dbReference type="ChEBI" id="CHEBI:29105"/>
        <note>catalytic</note>
    </ligand>
</feature>
<feature type="glycosylation site" description="N-linked (GlcNAc...) asparagine" evidence="2">
    <location>
        <position position="83"/>
    </location>
</feature>
<feature type="glycosylation site" description="N-linked (GlcNAc...) asparagine" evidence="2">
    <location>
        <position position="119"/>
    </location>
</feature>
<feature type="glycosylation site" description="N-linked (GlcNAc...) asparagine" evidence="2">
    <location>
        <position position="242"/>
    </location>
</feature>
<feature type="glycosylation site" description="N-linked (GlcNAc...) asparagine" evidence="2">
    <location>
        <position position="345"/>
    </location>
</feature>
<feature type="glycosylation site" description="N-linked (GlcNAc...) asparagine" evidence="2">
    <location>
        <position position="475"/>
    </location>
</feature>
<feature type="glycosylation site" description="N-linked (GlcNAc...) asparagine" evidence="2">
    <location>
        <position position="814"/>
    </location>
</feature>
<feature type="glycosylation site" description="N-linked (GlcNAc...) asparagine" evidence="2">
    <location>
        <position position="942"/>
    </location>
</feature>
<feature type="disulfide bond" evidence="1">
    <location>
        <begin position="333"/>
        <end position="382"/>
    </location>
</feature>
<feature type="disulfide bond" evidence="1">
    <location>
        <begin position="376"/>
        <end position="455"/>
    </location>
</feature>
<feature type="disulfide bond" evidence="1">
    <location>
        <begin position="415"/>
        <end position="441"/>
    </location>
</feature>
<feature type="disulfide bond" evidence="1">
    <location>
        <begin position="482"/>
        <end position="507"/>
    </location>
</feature>
<feature type="disulfide bond" evidence="1">
    <location>
        <begin position="493"/>
        <end position="516"/>
    </location>
</feature>
<feature type="disulfide bond" evidence="1">
    <location>
        <begin position="502"/>
        <end position="535"/>
    </location>
</feature>
<feature type="disulfide bond" evidence="1">
    <location>
        <begin position="529"/>
        <end position="540"/>
    </location>
</feature>
<feature type="disulfide bond" evidence="1">
    <location>
        <begin position="563"/>
        <end position="600"/>
    </location>
</feature>
<feature type="disulfide bond" evidence="1">
    <location>
        <begin position="567"/>
        <end position="605"/>
    </location>
</feature>
<feature type="disulfide bond" evidence="1">
    <location>
        <begin position="578"/>
        <end position="590"/>
    </location>
</feature>
<feature type="disulfide bond" evidence="1">
    <location>
        <begin position="978"/>
        <end position="1010"/>
    </location>
</feature>
<feature type="disulfide bond" evidence="1">
    <location>
        <begin position="982"/>
        <end position="1015"/>
    </location>
</feature>
<feature type="disulfide bond" evidence="1">
    <location>
        <begin position="993"/>
        <end position="999"/>
    </location>
</feature>
<feature type="sequence variant" id="VAR_055012" description="In dbSNP:rs788908." evidence="7 8 10">
    <original>R</original>
    <variation>K</variation>
    <location>
        <position position="138"/>
    </location>
</feature>
<feature type="sequence variant" id="VAR_081558" description="In HKLLS3; affects proteolytic maturation and impairs secretion; dbSNP:rs1177851177." evidence="9">
    <original>L</original>
    <variation>P</variation>
    <location>
        <position position="168"/>
    </location>
</feature>
<feature type="sequence variant" id="VAR_081559" description="In HKLLS3; affects proteolytic maturation and impairs secretion; dbSNP:rs61757480." evidence="9">
    <original>I</original>
    <variation>T</variation>
    <location>
        <position position="291"/>
    </location>
</feature>
<feature type="sequence variant" id="VAR_055013" description="In dbSNP:rs35864003.">
    <original>S</original>
    <variation>P</variation>
    <location>
        <position position="1074"/>
    </location>
</feature>
<feature type="sequence conflict" description="In Ref. 4; BAA20821." evidence="11" ref="4">
    <original>C</original>
    <variation>V</variation>
    <location>
        <position position="857"/>
    </location>
</feature>
<evidence type="ECO:0000250" key="1"/>
<evidence type="ECO:0000255" key="2"/>
<evidence type="ECO:0000255" key="3">
    <source>
        <dbReference type="PROSITE-ProRule" id="PRU00210"/>
    </source>
</evidence>
<evidence type="ECO:0000255" key="4">
    <source>
        <dbReference type="PROSITE-ProRule" id="PRU00233"/>
    </source>
</evidence>
<evidence type="ECO:0000255" key="5">
    <source>
        <dbReference type="PROSITE-ProRule" id="PRU00276"/>
    </source>
</evidence>
<evidence type="ECO:0000256" key="6">
    <source>
        <dbReference type="SAM" id="MobiDB-lite"/>
    </source>
</evidence>
<evidence type="ECO:0000269" key="7">
    <source>
    </source>
</evidence>
<evidence type="ECO:0000269" key="8">
    <source>
    </source>
</evidence>
<evidence type="ECO:0000269" key="9">
    <source>
    </source>
</evidence>
<evidence type="ECO:0000269" key="10">
    <source>
    </source>
</evidence>
<evidence type="ECO:0000305" key="11"/>
<keyword id="KW-0165">Cleavage on pair of basic residues</keyword>
<keyword id="KW-0225">Disease variant</keyword>
<keyword id="KW-1015">Disulfide bond</keyword>
<keyword id="KW-0272">Extracellular matrix</keyword>
<keyword id="KW-0325">Glycoprotein</keyword>
<keyword id="KW-0358">Heparin-binding</keyword>
<keyword id="KW-0378">Hydrolase</keyword>
<keyword id="KW-0479">Metal-binding</keyword>
<keyword id="KW-0482">Metalloprotease</keyword>
<keyword id="KW-0645">Protease</keyword>
<keyword id="KW-1267">Proteomics identification</keyword>
<keyword id="KW-1185">Reference proteome</keyword>
<keyword id="KW-0677">Repeat</keyword>
<keyword id="KW-0964">Secreted</keyword>
<keyword id="KW-0732">Signal</keyword>
<keyword id="KW-0862">Zinc</keyword>
<keyword id="KW-0865">Zymogen</keyword>
<organism>
    <name type="scientific">Homo sapiens</name>
    <name type="common">Human</name>
    <dbReference type="NCBI Taxonomy" id="9606"/>
    <lineage>
        <taxon>Eukaryota</taxon>
        <taxon>Metazoa</taxon>
        <taxon>Chordata</taxon>
        <taxon>Craniata</taxon>
        <taxon>Vertebrata</taxon>
        <taxon>Euteleostomi</taxon>
        <taxon>Mammalia</taxon>
        <taxon>Eutheria</taxon>
        <taxon>Euarchontoglires</taxon>
        <taxon>Primates</taxon>
        <taxon>Haplorrhini</taxon>
        <taxon>Catarrhini</taxon>
        <taxon>Hominidae</taxon>
        <taxon>Homo</taxon>
    </lineage>
</organism>
<sequence>MVLLSLWLIAAALVEVRTSADGQAGNEEMVQIDLPIKRYREYELVTPVSTNLEGRYLSHTLSASHKKRSARDVSSNPEQLFFNITAFGKDFHLRLKPNTQLVAPGAVVEWHETSLVPGNITDPINNHQPGSATYRIRRTEPLQTNCAYVGDIVDIPGTSVAISNCDGLAGMIKSDNEEYFIEPLERGKQMEEEKGRIHVVYKRSAVEQAPIDMSKDFHYRESDLEGLDDLGTVYGNIHQQLNETMRRRRHAGENDYNIEVLLGVDDSVVRFHGKEHVQNYLLTLMNIVNEIYHDESLGVHINVVLVRMIMLGYAKSISLIERGNPSRSLENVCRWASQQQRSDLNHSEHHDHAIFLTRQDFGPAGMQGYAPVTGMCHPVRSCTLNHEDGFSSAFVVAHETGHVLGMEHDGQGNRCGDETAMGSVMAPLVQAAFHRYHWSRCSGQELKRYIHSYDCLLDDPFDHDWPKLPELPGINYSMDEQCRFDFGVGYKMCTAFRTFDPCKQLWCSHPDNPYFCKTKKGPPLDGTECAAGKWCYKGHCMWKNANQQKQDGNWGSWTKFGSCSRTCGTGVRFRTRQCNNPMPINGGQDCPGVNFEYQLCNTEECQKHFEDFRAQQCQQRNSHFEYQNTKHHWLPYEHPDPKKRCHLYCQSKETGDVAYMKQLVHDGTHCSYKDPYSICVRGECVKVGCDKEIGSNKVEDKCGVCGGDNSHCRTVKGTFTRTPRKLGYLKMFDIPPGARHVLIQEDEASPHILAIKNQATGHYILNGKGEEAKSRTFIDLGVEWDYNIEDDIESLHTDGPLHDPVIVLIIPQENDTRSSLTYKYIIHEDSVPTINSNNVIQEELDTFEWALKSWSQCSKPCGGGFQYTKYGCRRKSDNKMVHRSFCEANKKPKPIRRMCNIQECTHPLWVAEEWEHCTKTCGSSGYQLRTVRCLQPLLDGTNRSVHSKYCMGDRPESRRPCNRVPCPAQWKTGPWSECSVTCGEGTEVRQVLCRAGDHCDGEKPESVRACQLPPCNDEPCLGDKSIFCQMEVLARYCSIPGYNKLCCESCSKRSSTLPPPYLLEAAETHDDVISNPSDLPRSLVMPTSLVPYHSETPAKKMSLSSISSVGGPNAYAAFRPNSKPDGANLRQRSAQQAGSKTVRLVTVPSSPPTKRVHLSSASQMAAASFFAASDSIGASSQARTSKKDGKIIDNRRPTRSSTLER</sequence>
<dbReference type="EC" id="3.4.24.-"/>
<dbReference type="EMBL" id="AC093790">
    <property type="status" value="NOT_ANNOTATED_CDS"/>
    <property type="molecule type" value="Genomic_DNA"/>
</dbReference>
<dbReference type="EMBL" id="AC095056">
    <property type="status" value="NOT_ANNOTATED_CDS"/>
    <property type="molecule type" value="Genomic_DNA"/>
</dbReference>
<dbReference type="EMBL" id="AC104814">
    <property type="status" value="NOT_ANNOTATED_CDS"/>
    <property type="molecule type" value="Genomic_DNA"/>
</dbReference>
<dbReference type="EMBL" id="BC130287">
    <property type="protein sequence ID" value="AAI30288.1"/>
    <property type="molecule type" value="mRNA"/>
</dbReference>
<dbReference type="EMBL" id="BC132735">
    <property type="protein sequence ID" value="AAI32736.1"/>
    <property type="molecule type" value="mRNA"/>
</dbReference>
<dbReference type="EMBL" id="AF247668">
    <property type="protein sequence ID" value="AAK28400.1"/>
    <property type="molecule type" value="mRNA"/>
</dbReference>
<dbReference type="EMBL" id="AB002364">
    <property type="protein sequence ID" value="BAA20821.1"/>
    <property type="molecule type" value="mRNA"/>
</dbReference>
<dbReference type="CCDS" id="CCDS3553.1"/>
<dbReference type="RefSeq" id="NP_055058.2">
    <property type="nucleotide sequence ID" value="NM_014243.3"/>
</dbReference>
<dbReference type="SMR" id="O15072"/>
<dbReference type="BioGRID" id="114886">
    <property type="interactions" value="8"/>
</dbReference>
<dbReference type="FunCoup" id="O15072">
    <property type="interactions" value="138"/>
</dbReference>
<dbReference type="IntAct" id="O15072">
    <property type="interactions" value="2"/>
</dbReference>
<dbReference type="STRING" id="9606.ENSP00000286657"/>
<dbReference type="MEROPS" id="M12.220"/>
<dbReference type="GlyCosmos" id="O15072">
    <property type="glycosylation" value="7 sites, No reported glycans"/>
</dbReference>
<dbReference type="GlyGen" id="O15072">
    <property type="glycosylation" value="16 sites, 2 N-linked glycans (2 sites), 2 O-linked glycans (9 sites)"/>
</dbReference>
<dbReference type="iPTMnet" id="O15072"/>
<dbReference type="PhosphoSitePlus" id="O15072"/>
<dbReference type="BioMuta" id="ADAMTS3"/>
<dbReference type="MassIVE" id="O15072"/>
<dbReference type="PaxDb" id="9606-ENSP00000286657"/>
<dbReference type="PeptideAtlas" id="O15072"/>
<dbReference type="ProteomicsDB" id="48427"/>
<dbReference type="Antibodypedia" id="12997">
    <property type="antibodies" value="56 antibodies from 18 providers"/>
</dbReference>
<dbReference type="DNASU" id="9508"/>
<dbReference type="Ensembl" id="ENST00000286657.10">
    <property type="protein sequence ID" value="ENSP00000286657.4"/>
    <property type="gene ID" value="ENSG00000156140.11"/>
</dbReference>
<dbReference type="GeneID" id="9508"/>
<dbReference type="KEGG" id="hsa:9508"/>
<dbReference type="MANE-Select" id="ENST00000286657.10">
    <property type="protein sequence ID" value="ENSP00000286657.4"/>
    <property type="RefSeq nucleotide sequence ID" value="NM_014243.3"/>
    <property type="RefSeq protein sequence ID" value="NP_055058.2"/>
</dbReference>
<dbReference type="UCSC" id="uc003hgk.2">
    <property type="organism name" value="human"/>
</dbReference>
<dbReference type="AGR" id="HGNC:219"/>
<dbReference type="CTD" id="9508"/>
<dbReference type="DisGeNET" id="9508"/>
<dbReference type="GeneCards" id="ADAMTS3"/>
<dbReference type="HGNC" id="HGNC:219">
    <property type="gene designation" value="ADAMTS3"/>
</dbReference>
<dbReference type="HPA" id="ENSG00000156140">
    <property type="expression patterns" value="Tissue enhanced (retina)"/>
</dbReference>
<dbReference type="MalaCards" id="ADAMTS3"/>
<dbReference type="MIM" id="605011">
    <property type="type" value="gene"/>
</dbReference>
<dbReference type="MIM" id="618154">
    <property type="type" value="phenotype"/>
</dbReference>
<dbReference type="neXtProt" id="NX_O15072"/>
<dbReference type="OpenTargets" id="ENSG00000156140"/>
<dbReference type="Orphanet" id="2136">
    <property type="disease" value="Hennekam syndrome"/>
</dbReference>
<dbReference type="PharmGKB" id="PA24547"/>
<dbReference type="VEuPathDB" id="HostDB:ENSG00000156140"/>
<dbReference type="eggNOG" id="KOG3538">
    <property type="taxonomic scope" value="Eukaryota"/>
</dbReference>
<dbReference type="GeneTree" id="ENSGT00940000156085"/>
<dbReference type="HOGENOM" id="CLU_000660_4_1_1"/>
<dbReference type="InParanoid" id="O15072"/>
<dbReference type="OMA" id="NWGAWTK"/>
<dbReference type="OrthoDB" id="5855429at2759"/>
<dbReference type="PAN-GO" id="O15072">
    <property type="GO annotations" value="3 GO annotations based on evolutionary models"/>
</dbReference>
<dbReference type="PhylomeDB" id="O15072"/>
<dbReference type="TreeFam" id="TF313537"/>
<dbReference type="BRENDA" id="3.4.24.14">
    <property type="organism ID" value="2681"/>
</dbReference>
<dbReference type="PathwayCommons" id="O15072"/>
<dbReference type="Reactome" id="R-HSA-1650814">
    <property type="pathway name" value="Collagen biosynthesis and modifying enzymes"/>
</dbReference>
<dbReference type="Reactome" id="R-HSA-5083635">
    <property type="pathway name" value="Defective B3GALTL causes PpS"/>
</dbReference>
<dbReference type="Reactome" id="R-HSA-5173214">
    <property type="pathway name" value="O-glycosylation of TSR domain-containing proteins"/>
</dbReference>
<dbReference type="SignaLink" id="O15072"/>
<dbReference type="BioGRID-ORCS" id="9508">
    <property type="hits" value="20 hits in 1158 CRISPR screens"/>
</dbReference>
<dbReference type="ChiTaRS" id="ADAMTS3">
    <property type="organism name" value="human"/>
</dbReference>
<dbReference type="GeneWiki" id="ADAMTS3"/>
<dbReference type="GenomeRNAi" id="9508"/>
<dbReference type="Pharos" id="O15072">
    <property type="development level" value="Tbio"/>
</dbReference>
<dbReference type="PRO" id="PR:O15072"/>
<dbReference type="Proteomes" id="UP000005640">
    <property type="component" value="Chromosome 4"/>
</dbReference>
<dbReference type="RNAct" id="O15072">
    <property type="molecule type" value="protein"/>
</dbReference>
<dbReference type="Bgee" id="ENSG00000156140">
    <property type="expression patterns" value="Expressed in endothelial cell and 128 other cell types or tissues"/>
</dbReference>
<dbReference type="GO" id="GO:0070062">
    <property type="term" value="C:extracellular exosome"/>
    <property type="evidence" value="ECO:0007005"/>
    <property type="project" value="UniProtKB"/>
</dbReference>
<dbReference type="GO" id="GO:0031012">
    <property type="term" value="C:extracellular matrix"/>
    <property type="evidence" value="ECO:0000318"/>
    <property type="project" value="GO_Central"/>
</dbReference>
<dbReference type="GO" id="GO:0005576">
    <property type="term" value="C:extracellular region"/>
    <property type="evidence" value="ECO:0000304"/>
    <property type="project" value="Reactome"/>
</dbReference>
<dbReference type="GO" id="GO:0005615">
    <property type="term" value="C:extracellular space"/>
    <property type="evidence" value="ECO:0000314"/>
    <property type="project" value="BHF-UCL"/>
</dbReference>
<dbReference type="GO" id="GO:0004175">
    <property type="term" value="F:endopeptidase activity"/>
    <property type="evidence" value="ECO:0000314"/>
    <property type="project" value="BHF-UCL"/>
</dbReference>
<dbReference type="GO" id="GO:0008201">
    <property type="term" value="F:heparin binding"/>
    <property type="evidence" value="ECO:0007669"/>
    <property type="project" value="UniProtKB-KW"/>
</dbReference>
<dbReference type="GO" id="GO:0004222">
    <property type="term" value="F:metalloendopeptidase activity"/>
    <property type="evidence" value="ECO:0000318"/>
    <property type="project" value="GO_Central"/>
</dbReference>
<dbReference type="GO" id="GO:0008270">
    <property type="term" value="F:zinc ion binding"/>
    <property type="evidence" value="ECO:0000303"/>
    <property type="project" value="UniProtKB"/>
</dbReference>
<dbReference type="GO" id="GO:0032964">
    <property type="term" value="P:collagen biosynthetic process"/>
    <property type="evidence" value="ECO:0000314"/>
    <property type="project" value="BHF-UCL"/>
</dbReference>
<dbReference type="GO" id="GO:0030574">
    <property type="term" value="P:collagen catabolic process"/>
    <property type="evidence" value="ECO:0000303"/>
    <property type="project" value="UniProtKB"/>
</dbReference>
<dbReference type="GO" id="GO:0030199">
    <property type="term" value="P:collagen fibril organization"/>
    <property type="evidence" value="ECO:0000304"/>
    <property type="project" value="Reactome"/>
</dbReference>
<dbReference type="GO" id="GO:0030198">
    <property type="term" value="P:extracellular matrix organization"/>
    <property type="evidence" value="ECO:0000318"/>
    <property type="project" value="GO_Central"/>
</dbReference>
<dbReference type="GO" id="GO:0001701">
    <property type="term" value="P:in utero embryonic development"/>
    <property type="evidence" value="ECO:0007669"/>
    <property type="project" value="Ensembl"/>
</dbReference>
<dbReference type="GO" id="GO:1900748">
    <property type="term" value="P:positive regulation of vascular endothelial growth factor signaling pathway"/>
    <property type="evidence" value="ECO:0000314"/>
    <property type="project" value="BHF-UCL"/>
</dbReference>
<dbReference type="GO" id="GO:0016485">
    <property type="term" value="P:protein processing"/>
    <property type="evidence" value="ECO:0000314"/>
    <property type="project" value="BHF-UCL"/>
</dbReference>
<dbReference type="GO" id="GO:0006508">
    <property type="term" value="P:proteolysis"/>
    <property type="evidence" value="ECO:0000318"/>
    <property type="project" value="GO_Central"/>
</dbReference>
<dbReference type="GO" id="GO:0097435">
    <property type="term" value="P:supramolecular fiber organization"/>
    <property type="evidence" value="ECO:0000305"/>
    <property type="project" value="BHF-UCL"/>
</dbReference>
<dbReference type="GO" id="GO:0010573">
    <property type="term" value="P:vascular endothelial growth factor production"/>
    <property type="evidence" value="ECO:0000314"/>
    <property type="project" value="BHF-UCL"/>
</dbReference>
<dbReference type="CDD" id="cd04273">
    <property type="entry name" value="ZnMc_ADAMTS_like"/>
    <property type="match status" value="1"/>
</dbReference>
<dbReference type="FunFam" id="2.20.100.10:FF:000006">
    <property type="entry name" value="A disintegrin and metalloproteinase with thrombospondin motifs 1"/>
    <property type="match status" value="1"/>
</dbReference>
<dbReference type="FunFam" id="2.60.120.830:FF:000001">
    <property type="entry name" value="A disintegrin and metalloproteinase with thrombospondin motifs 1"/>
    <property type="match status" value="1"/>
</dbReference>
<dbReference type="FunFam" id="2.20.100.10:FF:000011">
    <property type="entry name" value="A disintegrin and metalloproteinase with thrombospondin motifs 3"/>
    <property type="match status" value="1"/>
</dbReference>
<dbReference type="FunFam" id="2.20.100.10:FF:000022">
    <property type="entry name" value="A disintegrin and metalloproteinase with thrombospondin motifs 3"/>
    <property type="match status" value="1"/>
</dbReference>
<dbReference type="FunFam" id="2.20.100.10:FF:000030">
    <property type="entry name" value="A disintegrin and metalloproteinase with thrombospondin motifs 3"/>
    <property type="match status" value="1"/>
</dbReference>
<dbReference type="FunFam" id="3.40.1620.60:FF:000001">
    <property type="entry name" value="A disintegrin and metalloproteinase with thrombospondin motifs 3"/>
    <property type="match status" value="1"/>
</dbReference>
<dbReference type="FunFam" id="3.40.390.10:FF:000008">
    <property type="entry name" value="A disintegrin and metalloproteinase with thrombospondin motifs 3"/>
    <property type="match status" value="1"/>
</dbReference>
<dbReference type="Gene3D" id="2.60.120.830">
    <property type="match status" value="1"/>
</dbReference>
<dbReference type="Gene3D" id="3.40.1620.60">
    <property type="match status" value="1"/>
</dbReference>
<dbReference type="Gene3D" id="3.40.390.10">
    <property type="entry name" value="Collagenase (Catalytic Domain)"/>
    <property type="match status" value="1"/>
</dbReference>
<dbReference type="Gene3D" id="2.20.100.10">
    <property type="entry name" value="Thrombospondin type-1 (TSP1) repeat"/>
    <property type="match status" value="4"/>
</dbReference>
<dbReference type="InterPro" id="IPR013273">
    <property type="entry name" value="ADAMTS/ADAMTS-like"/>
</dbReference>
<dbReference type="InterPro" id="IPR050439">
    <property type="entry name" value="ADAMTS_ADAMTS-like"/>
</dbReference>
<dbReference type="InterPro" id="IPR041645">
    <property type="entry name" value="ADAMTS_CR_2"/>
</dbReference>
<dbReference type="InterPro" id="IPR045371">
    <property type="entry name" value="ADAMTS_CR_3"/>
</dbReference>
<dbReference type="InterPro" id="IPR010294">
    <property type="entry name" value="ADAMTS_spacer1"/>
</dbReference>
<dbReference type="InterPro" id="IPR024079">
    <property type="entry name" value="MetalloPept_cat_dom_sf"/>
</dbReference>
<dbReference type="InterPro" id="IPR001590">
    <property type="entry name" value="Peptidase_M12B"/>
</dbReference>
<dbReference type="InterPro" id="IPR002870">
    <property type="entry name" value="Peptidase_M12B_N"/>
</dbReference>
<dbReference type="InterPro" id="IPR010909">
    <property type="entry name" value="PLAC"/>
</dbReference>
<dbReference type="InterPro" id="IPR000884">
    <property type="entry name" value="TSP1_rpt"/>
</dbReference>
<dbReference type="InterPro" id="IPR036383">
    <property type="entry name" value="TSP1_rpt_sf"/>
</dbReference>
<dbReference type="PANTHER" id="PTHR13723:SF158">
    <property type="entry name" value="A DISINTEGRIN AND METALLOPROTEINASE WITH THROMBOSPONDIN MOTIFS 3"/>
    <property type="match status" value="1"/>
</dbReference>
<dbReference type="PANTHER" id="PTHR13723">
    <property type="entry name" value="ADAMTS A DISINTEGRIN AND METALLOPROTEASE WITH THROMBOSPONDIN MOTIFS PROTEASE"/>
    <property type="match status" value="1"/>
</dbReference>
<dbReference type="Pfam" id="PF17771">
    <property type="entry name" value="ADAMTS_CR_2"/>
    <property type="match status" value="1"/>
</dbReference>
<dbReference type="Pfam" id="PF19236">
    <property type="entry name" value="ADAMTS_CR_3"/>
    <property type="match status" value="1"/>
</dbReference>
<dbReference type="Pfam" id="PF05986">
    <property type="entry name" value="ADAMTS_spacer1"/>
    <property type="match status" value="1"/>
</dbReference>
<dbReference type="Pfam" id="PF01562">
    <property type="entry name" value="Pep_M12B_propep"/>
    <property type="match status" value="1"/>
</dbReference>
<dbReference type="Pfam" id="PF01421">
    <property type="entry name" value="Reprolysin"/>
    <property type="match status" value="1"/>
</dbReference>
<dbReference type="Pfam" id="PF19030">
    <property type="entry name" value="TSP1_ADAMTS"/>
    <property type="match status" value="3"/>
</dbReference>
<dbReference type="Pfam" id="PF00090">
    <property type="entry name" value="TSP_1"/>
    <property type="match status" value="1"/>
</dbReference>
<dbReference type="PRINTS" id="PR01857">
    <property type="entry name" value="ADAMTSFAMILY"/>
</dbReference>
<dbReference type="SMART" id="SM00209">
    <property type="entry name" value="TSP1"/>
    <property type="match status" value="4"/>
</dbReference>
<dbReference type="SUPFAM" id="SSF55486">
    <property type="entry name" value="Metalloproteases ('zincins'), catalytic domain"/>
    <property type="match status" value="1"/>
</dbReference>
<dbReference type="SUPFAM" id="SSF82895">
    <property type="entry name" value="TSP-1 type 1 repeat"/>
    <property type="match status" value="4"/>
</dbReference>
<dbReference type="PROSITE" id="PS50215">
    <property type="entry name" value="ADAM_MEPRO"/>
    <property type="match status" value="1"/>
</dbReference>
<dbReference type="PROSITE" id="PS50900">
    <property type="entry name" value="PLAC"/>
    <property type="match status" value="1"/>
</dbReference>
<dbReference type="PROSITE" id="PS50092">
    <property type="entry name" value="TSP1"/>
    <property type="match status" value="4"/>
</dbReference>
<reference key="1">
    <citation type="journal article" date="2005" name="Nature">
        <title>Generation and annotation of the DNA sequences of human chromosomes 2 and 4.</title>
        <authorList>
            <person name="Hillier L.W."/>
            <person name="Graves T.A."/>
            <person name="Fulton R.S."/>
            <person name="Fulton L.A."/>
            <person name="Pepin K.H."/>
            <person name="Minx P."/>
            <person name="Wagner-McPherson C."/>
            <person name="Layman D."/>
            <person name="Wylie K."/>
            <person name="Sekhon M."/>
            <person name="Becker M.C."/>
            <person name="Fewell G.A."/>
            <person name="Delehaunty K.D."/>
            <person name="Miner T.L."/>
            <person name="Nash W.E."/>
            <person name="Kremitzki C."/>
            <person name="Oddy L."/>
            <person name="Du H."/>
            <person name="Sun H."/>
            <person name="Bradshaw-Cordum H."/>
            <person name="Ali J."/>
            <person name="Carter J."/>
            <person name="Cordes M."/>
            <person name="Harris A."/>
            <person name="Isak A."/>
            <person name="van Brunt A."/>
            <person name="Nguyen C."/>
            <person name="Du F."/>
            <person name="Courtney L."/>
            <person name="Kalicki J."/>
            <person name="Ozersky P."/>
            <person name="Abbott S."/>
            <person name="Armstrong J."/>
            <person name="Belter E.A."/>
            <person name="Caruso L."/>
            <person name="Cedroni M."/>
            <person name="Cotton M."/>
            <person name="Davidson T."/>
            <person name="Desai A."/>
            <person name="Elliott G."/>
            <person name="Erb T."/>
            <person name="Fronick C."/>
            <person name="Gaige T."/>
            <person name="Haakenson W."/>
            <person name="Haglund K."/>
            <person name="Holmes A."/>
            <person name="Harkins R."/>
            <person name="Kim K."/>
            <person name="Kruchowski S.S."/>
            <person name="Strong C.M."/>
            <person name="Grewal N."/>
            <person name="Goyea E."/>
            <person name="Hou S."/>
            <person name="Levy A."/>
            <person name="Martinka S."/>
            <person name="Mead K."/>
            <person name="McLellan M.D."/>
            <person name="Meyer R."/>
            <person name="Randall-Maher J."/>
            <person name="Tomlinson C."/>
            <person name="Dauphin-Kohlberg S."/>
            <person name="Kozlowicz-Reilly A."/>
            <person name="Shah N."/>
            <person name="Swearengen-Shahid S."/>
            <person name="Snider J."/>
            <person name="Strong J.T."/>
            <person name="Thompson J."/>
            <person name="Yoakum M."/>
            <person name="Leonard S."/>
            <person name="Pearman C."/>
            <person name="Trani L."/>
            <person name="Radionenko M."/>
            <person name="Waligorski J.E."/>
            <person name="Wang C."/>
            <person name="Rock S.M."/>
            <person name="Tin-Wollam A.-M."/>
            <person name="Maupin R."/>
            <person name="Latreille P."/>
            <person name="Wendl M.C."/>
            <person name="Yang S.-P."/>
            <person name="Pohl C."/>
            <person name="Wallis J.W."/>
            <person name="Spieth J."/>
            <person name="Bieri T.A."/>
            <person name="Berkowicz N."/>
            <person name="Nelson J.O."/>
            <person name="Osborne J."/>
            <person name="Ding L."/>
            <person name="Meyer R."/>
            <person name="Sabo A."/>
            <person name="Shotland Y."/>
            <person name="Sinha P."/>
            <person name="Wohldmann P.E."/>
            <person name="Cook L.L."/>
            <person name="Hickenbotham M.T."/>
            <person name="Eldred J."/>
            <person name="Williams D."/>
            <person name="Jones T.A."/>
            <person name="She X."/>
            <person name="Ciccarelli F.D."/>
            <person name="Izaurralde E."/>
            <person name="Taylor J."/>
            <person name="Schmutz J."/>
            <person name="Myers R.M."/>
            <person name="Cox D.R."/>
            <person name="Huang X."/>
            <person name="McPherson J.D."/>
            <person name="Mardis E.R."/>
            <person name="Clifton S.W."/>
            <person name="Warren W.C."/>
            <person name="Chinwalla A.T."/>
            <person name="Eddy S.R."/>
            <person name="Marra M.A."/>
            <person name="Ovcharenko I."/>
            <person name="Furey T.S."/>
            <person name="Miller W."/>
            <person name="Eichler E.E."/>
            <person name="Bork P."/>
            <person name="Suyama M."/>
            <person name="Torrents D."/>
            <person name="Waterston R.H."/>
            <person name="Wilson R.K."/>
        </authorList>
    </citation>
    <scope>NUCLEOTIDE SEQUENCE [LARGE SCALE GENOMIC DNA]</scope>
</reference>
<reference key="2">
    <citation type="journal article" date="2004" name="Genome Res.">
        <title>The status, quality, and expansion of the NIH full-length cDNA project: the Mammalian Gene Collection (MGC).</title>
        <authorList>
            <consortium name="The MGC Project Team"/>
        </authorList>
    </citation>
    <scope>NUCLEOTIDE SEQUENCE [LARGE SCALE MRNA]</scope>
    <scope>VARIANT LYS-138</scope>
</reference>
<reference key="3">
    <citation type="journal article" date="2001" name="J. Biol. Chem.">
        <title>Procollagen II amino propeptide processing by ADAMTS-3. Insights on dermatosparaxis.</title>
        <authorList>
            <person name="Fernandes R.J."/>
            <person name="Hirohata S."/>
            <person name="Engle J.M."/>
            <person name="Colige A."/>
            <person name="Cohn D.H."/>
            <person name="Eyre D.R."/>
            <person name="Apte S.S."/>
        </authorList>
    </citation>
    <scope>NUCLEOTIDE SEQUENCE [MRNA] OF 1-227</scope>
    <scope>VARIANT LYS-138</scope>
</reference>
<reference key="4">
    <citation type="journal article" date="1997" name="DNA Res.">
        <title>Prediction of the coding sequences of unidentified human genes. VII. The complete sequences of 100 new cDNA clones from brain which can code for large proteins in vitro.</title>
        <authorList>
            <person name="Nagase T."/>
            <person name="Ishikawa K."/>
            <person name="Nakajima D."/>
            <person name="Ohira M."/>
            <person name="Seki N."/>
            <person name="Miyajima N."/>
            <person name="Tanaka A."/>
            <person name="Kotani H."/>
            <person name="Nomura N."/>
            <person name="Ohara O."/>
        </authorList>
    </citation>
    <scope>NUCLEOTIDE SEQUENCE [LARGE SCALE MRNA] OF 5-1205</scope>
    <scope>VARIANT LYS-138</scope>
    <source>
        <tissue>Brain</tissue>
    </source>
</reference>
<reference key="5">
    <citation type="journal article" date="2017" name="Hum. Mol. Genet.">
        <title>Loss of ADAMTS3 activity causes Hennekam lymphangiectasia-lymphedema syndrome 3.</title>
        <authorList>
            <person name="Brouillard P."/>
            <person name="Dupont L."/>
            <person name="Helaers R."/>
            <person name="Coulie R."/>
            <person name="Tiller G.E."/>
            <person name="Peeden J."/>
            <person name="Colige A."/>
            <person name="Vikkula M."/>
        </authorList>
    </citation>
    <scope>INVOLVEMENT IN HKLLS3</scope>
    <scope>VARIANTS HKLLS3 PRO-168 AND THR-291</scope>
    <scope>CHARACTERIZATION OF VARIANTS HKLLS3 PRO-168 AND THR-291</scope>
    <scope>SUBCELLULAR LOCATION</scope>
</reference>